<sequence>MNIRPLHDRVIVKRKEVETKSAGGIVLTGSAAAKSTRGEVLAVGNGRILENGEVKPLDVKVGDIVIFNDGYGVKSEKIDNEEVLIMSESDILAIVEA</sequence>
<name>CH10_ECOHS</name>
<accession>A8A7N8</accession>
<gene>
    <name evidence="1" type="primary">groES</name>
    <name evidence="1" type="synonym">groS</name>
    <name type="ordered locus">EcHS_A4383</name>
</gene>
<keyword id="KW-0143">Chaperone</keyword>
<keyword id="KW-0963">Cytoplasm</keyword>
<proteinExistence type="inferred from homology"/>
<protein>
    <recommendedName>
        <fullName evidence="1">Co-chaperonin GroES</fullName>
    </recommendedName>
    <alternativeName>
        <fullName evidence="1">10 kDa chaperonin</fullName>
    </alternativeName>
    <alternativeName>
        <fullName evidence="1">Chaperonin-10</fullName>
        <shortName evidence="1">Cpn10</shortName>
    </alternativeName>
</protein>
<dbReference type="EMBL" id="CP000802">
    <property type="protein sequence ID" value="ABV08542.1"/>
    <property type="molecule type" value="Genomic_DNA"/>
</dbReference>
<dbReference type="RefSeq" id="WP_001026276.1">
    <property type="nucleotide sequence ID" value="NC_009800.1"/>
</dbReference>
<dbReference type="BMRB" id="A8A7N8"/>
<dbReference type="SMR" id="A8A7N8"/>
<dbReference type="KEGG" id="ecx:EcHS_A4383"/>
<dbReference type="HOGENOM" id="CLU_132825_1_1_6"/>
<dbReference type="GO" id="GO:0005737">
    <property type="term" value="C:cytoplasm"/>
    <property type="evidence" value="ECO:0007669"/>
    <property type="project" value="UniProtKB-SubCell"/>
</dbReference>
<dbReference type="GO" id="GO:0005524">
    <property type="term" value="F:ATP binding"/>
    <property type="evidence" value="ECO:0007669"/>
    <property type="project" value="InterPro"/>
</dbReference>
<dbReference type="GO" id="GO:0046872">
    <property type="term" value="F:metal ion binding"/>
    <property type="evidence" value="ECO:0007669"/>
    <property type="project" value="TreeGrafter"/>
</dbReference>
<dbReference type="GO" id="GO:0044183">
    <property type="term" value="F:protein folding chaperone"/>
    <property type="evidence" value="ECO:0007669"/>
    <property type="project" value="InterPro"/>
</dbReference>
<dbReference type="GO" id="GO:0051087">
    <property type="term" value="F:protein-folding chaperone binding"/>
    <property type="evidence" value="ECO:0007669"/>
    <property type="project" value="TreeGrafter"/>
</dbReference>
<dbReference type="GO" id="GO:0051082">
    <property type="term" value="F:unfolded protein binding"/>
    <property type="evidence" value="ECO:0007669"/>
    <property type="project" value="TreeGrafter"/>
</dbReference>
<dbReference type="GO" id="GO:0051085">
    <property type="term" value="P:chaperone cofactor-dependent protein refolding"/>
    <property type="evidence" value="ECO:0007669"/>
    <property type="project" value="TreeGrafter"/>
</dbReference>
<dbReference type="CDD" id="cd00320">
    <property type="entry name" value="cpn10"/>
    <property type="match status" value="1"/>
</dbReference>
<dbReference type="FunFam" id="2.30.33.40:FF:000001">
    <property type="entry name" value="10 kDa chaperonin"/>
    <property type="match status" value="1"/>
</dbReference>
<dbReference type="Gene3D" id="2.30.33.40">
    <property type="entry name" value="GroES chaperonin"/>
    <property type="match status" value="1"/>
</dbReference>
<dbReference type="HAMAP" id="MF_00580">
    <property type="entry name" value="CH10"/>
    <property type="match status" value="1"/>
</dbReference>
<dbReference type="InterPro" id="IPR020818">
    <property type="entry name" value="Chaperonin_GroES"/>
</dbReference>
<dbReference type="InterPro" id="IPR037124">
    <property type="entry name" value="Chaperonin_GroES_sf"/>
</dbReference>
<dbReference type="InterPro" id="IPR018369">
    <property type="entry name" value="Chaprnonin_Cpn10_CS"/>
</dbReference>
<dbReference type="InterPro" id="IPR011032">
    <property type="entry name" value="GroES-like_sf"/>
</dbReference>
<dbReference type="NCBIfam" id="NF001526">
    <property type="entry name" value="PRK00364.1-1"/>
    <property type="match status" value="1"/>
</dbReference>
<dbReference type="NCBIfam" id="NF001527">
    <property type="entry name" value="PRK00364.1-2"/>
    <property type="match status" value="1"/>
</dbReference>
<dbReference type="NCBIfam" id="NF001531">
    <property type="entry name" value="PRK00364.2-2"/>
    <property type="match status" value="1"/>
</dbReference>
<dbReference type="PANTHER" id="PTHR10772">
    <property type="entry name" value="10 KDA HEAT SHOCK PROTEIN"/>
    <property type="match status" value="1"/>
</dbReference>
<dbReference type="PANTHER" id="PTHR10772:SF58">
    <property type="entry name" value="CO-CHAPERONIN GROES"/>
    <property type="match status" value="1"/>
</dbReference>
<dbReference type="Pfam" id="PF00166">
    <property type="entry name" value="Cpn10"/>
    <property type="match status" value="1"/>
</dbReference>
<dbReference type="PRINTS" id="PR00297">
    <property type="entry name" value="CHAPERONIN10"/>
</dbReference>
<dbReference type="SMART" id="SM00883">
    <property type="entry name" value="Cpn10"/>
    <property type="match status" value="1"/>
</dbReference>
<dbReference type="SUPFAM" id="SSF50129">
    <property type="entry name" value="GroES-like"/>
    <property type="match status" value="1"/>
</dbReference>
<dbReference type="PROSITE" id="PS00681">
    <property type="entry name" value="CHAPERONINS_CPN10"/>
    <property type="match status" value="1"/>
</dbReference>
<feature type="chain" id="PRO_1000061188" description="Co-chaperonin GroES">
    <location>
        <begin position="1"/>
        <end position="97"/>
    </location>
</feature>
<evidence type="ECO:0000255" key="1">
    <source>
        <dbReference type="HAMAP-Rule" id="MF_00580"/>
    </source>
</evidence>
<organism>
    <name type="scientific">Escherichia coli O9:H4 (strain HS)</name>
    <dbReference type="NCBI Taxonomy" id="331112"/>
    <lineage>
        <taxon>Bacteria</taxon>
        <taxon>Pseudomonadati</taxon>
        <taxon>Pseudomonadota</taxon>
        <taxon>Gammaproteobacteria</taxon>
        <taxon>Enterobacterales</taxon>
        <taxon>Enterobacteriaceae</taxon>
        <taxon>Escherichia</taxon>
    </lineage>
</organism>
<comment type="function">
    <text evidence="1">Together with the chaperonin GroEL, plays an essential role in assisting protein folding. The GroEL-GroES system forms a nano-cage that allows encapsulation of the non-native substrate proteins and provides a physical environment optimized to promote and accelerate protein folding. GroES binds to the apical surface of the GroEL ring, thereby capping the opening of the GroEL channel.</text>
</comment>
<comment type="subunit">
    <text evidence="1">Heptamer of 7 subunits arranged in a ring. Interacts with the chaperonin GroEL.</text>
</comment>
<comment type="subcellular location">
    <subcellularLocation>
        <location evidence="1">Cytoplasm</location>
    </subcellularLocation>
</comment>
<comment type="similarity">
    <text evidence="1">Belongs to the GroES chaperonin family.</text>
</comment>
<reference key="1">
    <citation type="journal article" date="2008" name="J. Bacteriol.">
        <title>The pangenome structure of Escherichia coli: comparative genomic analysis of E. coli commensal and pathogenic isolates.</title>
        <authorList>
            <person name="Rasko D.A."/>
            <person name="Rosovitz M.J."/>
            <person name="Myers G.S.A."/>
            <person name="Mongodin E.F."/>
            <person name="Fricke W.F."/>
            <person name="Gajer P."/>
            <person name="Crabtree J."/>
            <person name="Sebaihia M."/>
            <person name="Thomson N.R."/>
            <person name="Chaudhuri R."/>
            <person name="Henderson I.R."/>
            <person name="Sperandio V."/>
            <person name="Ravel J."/>
        </authorList>
    </citation>
    <scope>NUCLEOTIDE SEQUENCE [LARGE SCALE GENOMIC DNA]</scope>
    <source>
        <strain>HS</strain>
    </source>
</reference>